<organism>
    <name type="scientific">Oryctolagus cuniculus</name>
    <name type="common">Rabbit</name>
    <dbReference type="NCBI Taxonomy" id="9986"/>
    <lineage>
        <taxon>Eukaryota</taxon>
        <taxon>Metazoa</taxon>
        <taxon>Chordata</taxon>
        <taxon>Craniata</taxon>
        <taxon>Vertebrata</taxon>
        <taxon>Euteleostomi</taxon>
        <taxon>Mammalia</taxon>
        <taxon>Eutheria</taxon>
        <taxon>Euarchontoglires</taxon>
        <taxon>Glires</taxon>
        <taxon>Lagomorpha</taxon>
        <taxon>Leporidae</taxon>
        <taxon>Oryctolagus</taxon>
    </lineage>
</organism>
<dbReference type="EMBL" id="J03247">
    <property type="protein sequence ID" value="AAA31446.1"/>
    <property type="status" value="ALT_SEQ"/>
    <property type="molecule type" value="mRNA"/>
</dbReference>
<dbReference type="EMBL" id="M64656">
    <property type="protein sequence ID" value="AAC23909.1"/>
    <property type="molecule type" value="mRNA"/>
</dbReference>
<dbReference type="PIR" id="A31334">
    <property type="entry name" value="A31334"/>
</dbReference>
<dbReference type="RefSeq" id="NP_001159389.1">
    <molecule id="P18688-3"/>
    <property type="nucleotide sequence ID" value="NM_001165917.1"/>
</dbReference>
<dbReference type="RefSeq" id="XP_008270917.2">
    <molecule id="P18688-1"/>
    <property type="nucleotide sequence ID" value="XM_008272695.4"/>
</dbReference>
<dbReference type="RefSeq" id="XP_017205120.2">
    <molecule id="P18688-2"/>
    <property type="nucleotide sequence ID" value="XM_017349631.3"/>
</dbReference>
<dbReference type="SMR" id="P18688"/>
<dbReference type="DIP" id="DIP-44274N"/>
<dbReference type="FunCoup" id="P18688">
    <property type="interactions" value="47"/>
</dbReference>
<dbReference type="IntAct" id="P18688">
    <property type="interactions" value="1"/>
</dbReference>
<dbReference type="MINT" id="P18688"/>
<dbReference type="STRING" id="9986.ENSOCUP00000024040"/>
<dbReference type="BindingDB" id="P18688"/>
<dbReference type="iPTMnet" id="P18688"/>
<dbReference type="PaxDb" id="9986-ENSOCUP00000024040"/>
<dbReference type="GeneID" id="100303771"/>
<dbReference type="KEGG" id="ocu:100303771"/>
<dbReference type="CTD" id="5255"/>
<dbReference type="eggNOG" id="KOG3635">
    <property type="taxonomic scope" value="Eukaryota"/>
</dbReference>
<dbReference type="InParanoid" id="P18688"/>
<dbReference type="OrthoDB" id="5971574at2759"/>
<dbReference type="BRENDA" id="2.7.11.19">
    <property type="organism ID" value="1749"/>
</dbReference>
<dbReference type="UniPathway" id="UPA00163"/>
<dbReference type="Proteomes" id="UP000001811">
    <property type="component" value="Unplaced"/>
</dbReference>
<dbReference type="GO" id="GO:0005964">
    <property type="term" value="C:phosphorylase kinase complex"/>
    <property type="evidence" value="ECO:0000314"/>
    <property type="project" value="FlyBase"/>
</dbReference>
<dbReference type="GO" id="GO:0005886">
    <property type="term" value="C:plasma membrane"/>
    <property type="evidence" value="ECO:0007669"/>
    <property type="project" value="UniProtKB-SubCell"/>
</dbReference>
<dbReference type="GO" id="GO:0005516">
    <property type="term" value="F:calmodulin binding"/>
    <property type="evidence" value="ECO:0007669"/>
    <property type="project" value="UniProtKB-KW"/>
</dbReference>
<dbReference type="GO" id="GO:0005977">
    <property type="term" value="P:glycogen metabolic process"/>
    <property type="evidence" value="ECO:0007669"/>
    <property type="project" value="UniProtKB-UniPathway"/>
</dbReference>
<dbReference type="FunFam" id="1.50.10.10:FF:000004">
    <property type="entry name" value="Phosphorylase b kinase regulatory subunit"/>
    <property type="match status" value="1"/>
</dbReference>
<dbReference type="Gene3D" id="1.50.10.10">
    <property type="match status" value="1"/>
</dbReference>
<dbReference type="InterPro" id="IPR008928">
    <property type="entry name" value="6-hairpin_glycosidase_sf"/>
</dbReference>
<dbReference type="InterPro" id="IPR012341">
    <property type="entry name" value="6hp_glycosidase-like_sf"/>
</dbReference>
<dbReference type="InterPro" id="IPR011613">
    <property type="entry name" value="GH15-like"/>
</dbReference>
<dbReference type="InterPro" id="IPR045583">
    <property type="entry name" value="KPBA/B_C"/>
</dbReference>
<dbReference type="InterPro" id="IPR008734">
    <property type="entry name" value="PHK_A/B_su"/>
</dbReference>
<dbReference type="PANTHER" id="PTHR10749">
    <property type="entry name" value="PHOSPHORYLASE B KINASE REGULATORY SUBUNIT"/>
    <property type="match status" value="1"/>
</dbReference>
<dbReference type="PANTHER" id="PTHR10749:SF4">
    <property type="entry name" value="PHOSPHORYLASE B KINASE REGULATORY SUBUNIT ALPHA, SKELETAL MUSCLE ISOFORM"/>
    <property type="match status" value="1"/>
</dbReference>
<dbReference type="Pfam" id="PF00723">
    <property type="entry name" value="Glyco_hydro_15"/>
    <property type="match status" value="1"/>
</dbReference>
<dbReference type="Pfam" id="PF19292">
    <property type="entry name" value="KPBB_C"/>
    <property type="match status" value="1"/>
</dbReference>
<dbReference type="SUPFAM" id="SSF48208">
    <property type="entry name" value="Six-hairpin glycosidases"/>
    <property type="match status" value="1"/>
</dbReference>
<feature type="chain" id="PRO_0000057729" description="Phosphorylase b kinase regulatory subunit alpha, skeletal muscle isoform">
    <location>
        <begin position="1"/>
        <end position="1237"/>
    </location>
</feature>
<feature type="region of interest" description="Calmodulin-binding" evidence="3">
    <location>
        <begin position="810"/>
        <end position="840"/>
    </location>
</feature>
<feature type="region of interest" description="Disordered" evidence="4">
    <location>
        <begin position="1021"/>
        <end position="1069"/>
    </location>
</feature>
<feature type="region of interest" description="Calmodulin-binding" evidence="3">
    <location>
        <begin position="1060"/>
        <end position="1100"/>
    </location>
</feature>
<feature type="compositionally biased region" description="Low complexity" evidence="4">
    <location>
        <begin position="1042"/>
        <end position="1056"/>
    </location>
</feature>
<feature type="site" description="Not methylated" evidence="5">
    <location>
        <position position="1234"/>
    </location>
</feature>
<feature type="modified residue" description="Phosphoserine" evidence="2">
    <location>
        <position position="629"/>
    </location>
</feature>
<feature type="modified residue" description="Phosphoserine" evidence="1">
    <location>
        <position position="729"/>
    </location>
</feature>
<feature type="modified residue" description="Phosphoserine" evidence="1">
    <location>
        <position position="735"/>
    </location>
</feature>
<feature type="modified residue" description="Phosphoserine" evidence="1">
    <location>
        <position position="758"/>
    </location>
</feature>
<feature type="modified residue" description="Phosphoserine; by autocatalysis" evidence="7 8">
    <location>
        <position position="972"/>
    </location>
</feature>
<feature type="modified residue" description="Phosphoserine" evidence="1">
    <location>
        <position position="981"/>
    </location>
</feature>
<feature type="modified residue" description="Phosphoserine; by autocatalysis" evidence="7 8">
    <location>
        <position position="985"/>
    </location>
</feature>
<feature type="modified residue" description="Phosphoserine; by autocatalysis" evidence="7 8">
    <location>
        <position position="1007"/>
    </location>
</feature>
<feature type="modified residue" description="Phosphoserine; by PKA" evidence="6 7 8">
    <location>
        <position position="1018"/>
    </location>
</feature>
<feature type="modified residue" description="Phosphoserine" evidence="7 8">
    <location>
        <position position="1020"/>
    </location>
</feature>
<feature type="modified residue" description="Phosphoserine" evidence="7 8">
    <location>
        <position position="1023"/>
    </location>
</feature>
<feature type="modified residue" description="Phosphoserine" evidence="7 8">
    <location>
        <position position="1030"/>
    </location>
</feature>
<feature type="modified residue" description="Phosphoserine" evidence="2">
    <location>
        <position position="1127"/>
    </location>
</feature>
<feature type="lipid moiety-binding region" description="S-farnesyl cysteine" evidence="5">
    <location>
        <position position="1234"/>
    </location>
</feature>
<feature type="splice variant" id="VSP_004699" description="In isoform 3." evidence="9">
    <location>
        <begin position="654"/>
        <end position="712"/>
    </location>
</feature>
<feature type="splice variant" id="VSP_004700" description="In isoform 3." evidence="9">
    <original>N</original>
    <variation>D</variation>
    <location>
        <position position="713"/>
    </location>
</feature>
<feature type="splice variant" id="VSP_004701" description="In isoform 2." evidence="10">
    <location>
        <begin position="1012"/>
        <end position="1024"/>
    </location>
</feature>
<comment type="function">
    <text>Phosphorylase b kinase catalyzes the phosphorylation of serine in certain substrates, including troponin I. The alpha chain may bind calmodulin.</text>
</comment>
<comment type="activity regulation">
    <text>By phosphorylation of various serine residues and by calcium.</text>
</comment>
<comment type="pathway">
    <text>Glycan biosynthesis; glycogen metabolism.</text>
</comment>
<comment type="subunit">
    <text>Hexadecamer of 4 heterotetramers, each composed of alpha, beta, gamma, and delta subunits. Alpha (PHKA1 or PHKA2) and beta (PHKB) are regulatory subunits, gamma (PHKG1 or PHKG2) is the catalytic subunit, and delta is calmodulin.</text>
</comment>
<comment type="subcellular location">
    <subcellularLocation>
        <location evidence="10">Cell membrane</location>
        <topology evidence="10">Lipid-anchor</topology>
        <orientation evidence="10">Cytoplasmic side</orientation>
    </subcellularLocation>
</comment>
<comment type="alternative products">
    <event type="alternative splicing"/>
    <isoform>
        <id>P18688-1</id>
        <name>1</name>
        <name>ABC</name>
        <name>Alpha</name>
        <sequence type="displayed"/>
    </isoform>
    <isoform>
        <id>P18688-2</id>
        <name>2</name>
        <name>BC</name>
        <sequence type="described" ref="VSP_004701"/>
    </isoform>
    <isoform>
        <id>P18688-3</id>
        <name>3</name>
        <name>Alpha'</name>
        <sequence type="described" ref="VSP_004699 VSP_004700"/>
    </isoform>
</comment>
<comment type="tissue specificity">
    <text>Isoform 1 predominates in muscle, heart, brain and testis. Isoforms 1 and 2 are expressed in similar quantities in the other tissues. Isoform 3 is highly expressed in slow muscle and heart.</text>
</comment>
<comment type="PTM">
    <text evidence="7 8">Phosphorylation of Ser-1018 by PKA stimulates the dephosphorylation of the beta subunit and, thus, reverses the initial stimulation of PHK by the faster beta-subunit phosphorylation by PKA, that occurs in muscle in response to adrenaline.</text>
</comment>
<comment type="PTM">
    <text evidence="5">Cys-1234 is farnesylated, but the C-terminal tripeptide is not removed and the cysteine carboxyl is not methylated.</text>
</comment>
<comment type="similarity">
    <text evidence="10">Belongs to the phosphorylase b kinase regulatory chain family.</text>
</comment>
<evidence type="ECO:0000250" key="1">
    <source>
        <dbReference type="UniProtKB" id="P46020"/>
    </source>
</evidence>
<evidence type="ECO:0000250" key="2">
    <source>
        <dbReference type="UniProtKB" id="Q64649"/>
    </source>
</evidence>
<evidence type="ECO:0000255" key="3"/>
<evidence type="ECO:0000256" key="4">
    <source>
        <dbReference type="SAM" id="MobiDB-lite"/>
    </source>
</evidence>
<evidence type="ECO:0000269" key="5">
    <source>
    </source>
</evidence>
<evidence type="ECO:0000269" key="6">
    <source>
    </source>
</evidence>
<evidence type="ECO:0000269" key="7">
    <source>
    </source>
</evidence>
<evidence type="ECO:0000269" key="8">
    <source>
    </source>
</evidence>
<evidence type="ECO:0000303" key="9">
    <source>
    </source>
</evidence>
<evidence type="ECO:0000305" key="10"/>
<proteinExistence type="evidence at protein level"/>
<protein>
    <recommendedName>
        <fullName>Phosphorylase b kinase regulatory subunit alpha, skeletal muscle isoform</fullName>
        <shortName>Phosphorylase kinase alpha M subunit</shortName>
    </recommendedName>
</protein>
<name>KPB1_RABIT</name>
<gene>
    <name type="primary">PHKA1</name>
</gene>
<accession>P18688</accession>
<sequence length="1237" mass="138413">MRSRSNSGVRLDSYARLVQQTILCHQNPVTGLLPASYDQKDAWVRDNVYSILAVWGLGLAYRKNADRDEDKAKAYELEQSVVKLMRGLLHCMIRQVDKVESFKYSQSTKDSLHAKYNTKTCATVVGDDQWGHLQLDATSVYLLFLAQMTASGLHIIHSLDEVNFIQNLVFYIEAAYKTADFGIWERGDKTNQGISELNASSVGMAKAALEALDELDLFGVKGGPQSVIHVLADEVQHCQSILNSLLPRASTSKEVDASLLSVISFPAFAVEDSKLVEITKQEIITKLQGRYGCCRFLRDGYKTPKEDPNRLYYEPAELKLFENIECEWPLFWTYFILDGVFSGNAEQVQEYREALEAVLIKGKNGVPLLPELYSVPPDKVDEEYQNPHTVDRVPMGKLPHMWGQSLYILGSLMAEGFLAPGEIDPLNRRFSTVPKPDVVVQVSILAETEEIKAILKDKGINVETIAEVYPIRVQPARILSHIYSSLGCNNRMKLSGRPYRHMGVLGTSKLYDIRKTIFTFTPQFIDQQQFYLALDNKMIVEMLRTDLSYLCSRWRMTGQPTITFPISQTMLDEDGTSLNSSILAALRKMQDGYFGGARIQTGKLSEFLTTSCCTHLSFMDPGPEGKLYSEDYDDNYDELESGDWMDGYNSTSTARCGDEVARYLDHLLAHTAPHPKLAPASQKGGLNRFRAAVQTTCDLMSLVTKAKELHVQNVHMYLPTKLFQASRPSLNLLDSSHPSQEDQVPTVRVEVHLPRDQSGEVDFQALVLQLKETSSLQEQADILYMLYTMKGPDWDTELYEEGSATVRELLTELYGKVGKIRHWGLIRYISGILRKKVEALDEACTDLLSHQKHLTVGLPPEPREKTISAPLPYEALTRLIEEACEGDMNISILTQEIMVYLAMYMRTQPGLFAEMFRLRIGLIIQVMATELAHSLRCSAEEATEGLMNLSPSAMKNLLHHILSGKEFGVERSVRPTDSNVSPAISIHEIGAVGATKTERTGIMQLKSEIKQVEFRRLSISTESQPNGGHSLGADLMSPSFLSPGTSVTPSSGSFPGHHTSKDSRQGQWQRRRRLDGALNRVPIGFYQKVWKVLQKCHGLSVEGFVLPSSTTREMTPGEIKFSVHVESVLNRVPQPEYRQLLVEAILVLTMLADIEIHSIGSIIAVEKIVHIANDLFLQEQKTLGADDIMLAKDPASGICTLLYDSAPSGRFGTMTYLSKAAATYVQEFLPHSICAMQ</sequence>
<reference key="1">
    <citation type="journal article" date="1988" name="Proc. Natl. Acad. Sci. U.S.A.">
        <title>cDNA cloning and complete primary structure of skeletal muscle phosphorylase kinase (alpha subunit).</title>
        <authorList>
            <person name="Zander N.F."/>
            <person name="Meyer H.E."/>
            <person name="Hoffmann-Posorske E."/>
            <person name="Crabb J.W."/>
            <person name="Heilmeyer L.M.G. Jr."/>
            <person name="Kilimann M.W."/>
        </authorList>
    </citation>
    <scope>NUCLEOTIDE SEQUENCE [MRNA] (ISOFORM 1)</scope>
    <scope>PROTEIN SEQUENCE OF 1-37; 178-274; 303-334; 380-397; 459-472; 589-598; 627-669; 708-719; 722-733; 772-815; 966-1058; 1113-1127 AND 1168-1237 (ISOFORM 1)</scope>
    <scope>PHOSPHORYLATION AT SER-972; SER-985; SER-1007; SER-1018; SER-1020; SER-1023 AND SER-1030</scope>
    <source>
        <tissue>Skeletal muscle</tissue>
    </source>
</reference>
<reference key="2">
    <citation type="journal article" date="1991" name="J. Biol. Chem.">
        <title>Isoform diversity of phosphorylase kinase alpha and beta subunits generated by alternative RNA splicing.</title>
        <authorList>
            <person name="Harmann B."/>
            <person name="Zander N.F."/>
            <person name="Kilimann M.W."/>
        </authorList>
    </citation>
    <scope>NUCLEOTIDE SEQUENCE [MRNA] (ISOFORMS 1 AND 3)</scope>
</reference>
<reference key="3">
    <citation type="journal article" date="1975" name="Eur. J. Biochem.">
        <title>The hormonal control of activity of skeletal muscle phosphorylase kinase. Amino-acid sequences at the two sites of action of adenosine-3':5'-monophosphate-dependent protein kinase.</title>
        <authorList>
            <person name="Cohen P."/>
            <person name="Watson D.C."/>
            <person name="Dixon G.H."/>
        </authorList>
    </citation>
    <scope>PROTEIN SEQUENCE OF 1016-1027</scope>
</reference>
<reference key="4">
    <citation type="journal article" date="1992" name="Proc. Natl. Acad. Sci. U.S.A.">
        <title>Farnesylcysteine, a constituent of the alpha and beta subunits of rabbit skeletal muscle phosphorylase kinase: localization by conversion to S-ethylcysteine and by tandem mass spectrometry.</title>
        <authorList>
            <person name="Heilmeyer L.M. Jr."/>
            <person name="Serwe M."/>
            <person name="Weber C."/>
            <person name="Metzger J."/>
            <person name="Hoffmann-Posorske E."/>
            <person name="Meyer H.E."/>
        </authorList>
    </citation>
    <scope>PROTEIN SEQUENCE OF 1221-1237</scope>
    <scope>ISOPRENYLATION AT CYS-1234</scope>
    <scope>IDENTIFICATION BY MASS SPECTROMETRY</scope>
</reference>
<reference key="5">
    <citation type="journal article" date="1993" name="J. Biol. Chem.">
        <title>The multiphosphorylation domain of the phosphorylase kinase alpha M and alpha L subunits is a hotspot of differential mRNA processing and of molecular evolution.</title>
        <authorList>
            <person name="Wuellrich A."/>
            <person name="Hamacher C."/>
            <person name="Schneider A."/>
            <person name="Kilimann M.W."/>
        </authorList>
    </citation>
    <scope>ALTERNATIVE SPLICING (ISOFORMS 1 AND 2)</scope>
</reference>
<reference key="6">
    <citation type="journal article" date="1990" name="Eur. J. Biochem.">
        <title>Localization of phosphoserine residues in the alpha subunit of rabbit skeletal muscle phosphorylase kinase.</title>
        <authorList>
            <person name="Meyer H.E."/>
            <person name="Meyer G.F."/>
            <person name="Dirks H."/>
            <person name="Heilmeyer L.M.G. Jr."/>
        </authorList>
    </citation>
    <scope>PROTEIN SEQUENCE OF 966-996 AND 1000-1040</scope>
    <scope>PHOSPHORYLATION AT SER-972; SER-985; SER-1007; SER-1018; SER-1020; SER-1023 AND SER-1030</scope>
</reference>
<keyword id="KW-0025">Alternative splicing</keyword>
<keyword id="KW-0112">Calmodulin-binding</keyword>
<keyword id="KW-0119">Carbohydrate metabolism</keyword>
<keyword id="KW-1003">Cell membrane</keyword>
<keyword id="KW-0903">Direct protein sequencing</keyword>
<keyword id="KW-0321">Glycogen metabolism</keyword>
<keyword id="KW-0449">Lipoprotein</keyword>
<keyword id="KW-0472">Membrane</keyword>
<keyword id="KW-0514">Muscle protein</keyword>
<keyword id="KW-0597">Phosphoprotein</keyword>
<keyword id="KW-0636">Prenylation</keyword>
<keyword id="KW-1185">Reference proteome</keyword>